<evidence type="ECO:0000255" key="1">
    <source>
        <dbReference type="HAMAP-Rule" id="MF_01267"/>
    </source>
</evidence>
<keyword id="KW-0119">Carbohydrate metabolism</keyword>
<keyword id="KW-0210">Decarboxylase</keyword>
<keyword id="KW-0456">Lyase</keyword>
<keyword id="KW-0460">Magnesium</keyword>
<keyword id="KW-0479">Metal-binding</keyword>
<accession>B7LLX8</accession>
<feature type="chain" id="PRO_1000140117" description="3-keto-L-gulonate-6-phosphate decarboxylase UlaD">
    <location>
        <begin position="1"/>
        <end position="216"/>
    </location>
</feature>
<feature type="binding site" evidence="1">
    <location>
        <position position="11"/>
    </location>
    <ligand>
        <name>substrate</name>
    </ligand>
</feature>
<feature type="binding site" evidence="1">
    <location>
        <position position="33"/>
    </location>
    <ligand>
        <name>Mg(2+)</name>
        <dbReference type="ChEBI" id="CHEBI:18420"/>
    </ligand>
</feature>
<feature type="binding site" evidence="1">
    <location>
        <position position="62"/>
    </location>
    <ligand>
        <name>Mg(2+)</name>
        <dbReference type="ChEBI" id="CHEBI:18420"/>
    </ligand>
</feature>
<feature type="binding site" evidence="1">
    <location>
        <position position="192"/>
    </location>
    <ligand>
        <name>substrate</name>
    </ligand>
</feature>
<feature type="site" description="Transition state stabilizer" evidence="1">
    <location>
        <position position="64"/>
    </location>
</feature>
<feature type="site" description="Transition state stabilizer" evidence="1">
    <location>
        <position position="67"/>
    </location>
</feature>
<name>ULAD_ESCF3</name>
<comment type="function">
    <text evidence="1">Catalyzes the decarboxylation of 3-keto-L-gulonate-6-P into L-xylulose-5-P. Is involved in the anaerobic L-ascorbate utilization.</text>
</comment>
<comment type="catalytic activity">
    <reaction evidence="1">
        <text>3-dehydro-L-gulonate 6-phosphate + H(+) = L-xylulose 5-phosphate + CO2</text>
        <dbReference type="Rhea" id="RHEA:14353"/>
        <dbReference type="ChEBI" id="CHEBI:15378"/>
        <dbReference type="ChEBI" id="CHEBI:16526"/>
        <dbReference type="ChEBI" id="CHEBI:57829"/>
        <dbReference type="ChEBI" id="CHEBI:58774"/>
        <dbReference type="EC" id="4.1.1.85"/>
    </reaction>
</comment>
<comment type="cofactor">
    <cofactor evidence="1">
        <name>Mg(2+)</name>
        <dbReference type="ChEBI" id="CHEBI:18420"/>
    </cofactor>
    <text evidence="1">Binds 1 Mg(2+) ion per subunit.</text>
</comment>
<comment type="pathway">
    <text evidence="1">Cofactor degradation; L-ascorbate degradation; D-xylulose 5-phosphate from L-ascorbate: step 2/4.</text>
</comment>
<comment type="subunit">
    <text evidence="1">Homodimer.</text>
</comment>
<comment type="induction">
    <text evidence="1">Induced by L-ascorbate. Repressed by UlaR.</text>
</comment>
<comment type="similarity">
    <text evidence="1">Belongs to the HPS/KGPDC family. KGPDC subfamily.</text>
</comment>
<reference key="1">
    <citation type="journal article" date="2009" name="PLoS Genet.">
        <title>Organised genome dynamics in the Escherichia coli species results in highly diverse adaptive paths.</title>
        <authorList>
            <person name="Touchon M."/>
            <person name="Hoede C."/>
            <person name="Tenaillon O."/>
            <person name="Barbe V."/>
            <person name="Baeriswyl S."/>
            <person name="Bidet P."/>
            <person name="Bingen E."/>
            <person name="Bonacorsi S."/>
            <person name="Bouchier C."/>
            <person name="Bouvet O."/>
            <person name="Calteau A."/>
            <person name="Chiapello H."/>
            <person name="Clermont O."/>
            <person name="Cruveiller S."/>
            <person name="Danchin A."/>
            <person name="Diard M."/>
            <person name="Dossat C."/>
            <person name="Karoui M.E."/>
            <person name="Frapy E."/>
            <person name="Garry L."/>
            <person name="Ghigo J.M."/>
            <person name="Gilles A.M."/>
            <person name="Johnson J."/>
            <person name="Le Bouguenec C."/>
            <person name="Lescat M."/>
            <person name="Mangenot S."/>
            <person name="Martinez-Jehanne V."/>
            <person name="Matic I."/>
            <person name="Nassif X."/>
            <person name="Oztas S."/>
            <person name="Petit M.A."/>
            <person name="Pichon C."/>
            <person name="Rouy Z."/>
            <person name="Ruf C.S."/>
            <person name="Schneider D."/>
            <person name="Tourret J."/>
            <person name="Vacherie B."/>
            <person name="Vallenet D."/>
            <person name="Medigue C."/>
            <person name="Rocha E.P.C."/>
            <person name="Denamur E."/>
        </authorList>
    </citation>
    <scope>NUCLEOTIDE SEQUENCE [LARGE SCALE GENOMIC DNA]</scope>
    <source>
        <strain>ATCC 35469 / DSM 13698 / BCRC 15582 / CCUG 18766 / IAM 14443 / JCM 21226 / LMG 7866 / NBRC 102419 / NCTC 12128 / CDC 0568-73</strain>
    </source>
</reference>
<dbReference type="EC" id="4.1.1.85" evidence="1"/>
<dbReference type="EMBL" id="CU928158">
    <property type="protein sequence ID" value="CAQ91668.1"/>
    <property type="molecule type" value="Genomic_DNA"/>
</dbReference>
<dbReference type="RefSeq" id="WP_000056740.1">
    <property type="nucleotide sequence ID" value="NC_011740.1"/>
</dbReference>
<dbReference type="SMR" id="B7LLX8"/>
<dbReference type="GeneID" id="75059163"/>
<dbReference type="KEGG" id="efe:EFER_4249"/>
<dbReference type="HOGENOM" id="CLU_081825_0_0_6"/>
<dbReference type="OrthoDB" id="43475at2"/>
<dbReference type="UniPathway" id="UPA00263">
    <property type="reaction ID" value="UER00378"/>
</dbReference>
<dbReference type="Proteomes" id="UP000000745">
    <property type="component" value="Chromosome"/>
</dbReference>
<dbReference type="GO" id="GO:0033982">
    <property type="term" value="F:3-dehydro-L-gulonate-6-phosphate decarboxylase activity"/>
    <property type="evidence" value="ECO:0007669"/>
    <property type="project" value="UniProtKB-EC"/>
</dbReference>
<dbReference type="GO" id="GO:0000287">
    <property type="term" value="F:magnesium ion binding"/>
    <property type="evidence" value="ECO:0007669"/>
    <property type="project" value="UniProtKB-UniRule"/>
</dbReference>
<dbReference type="GO" id="GO:0004590">
    <property type="term" value="F:orotidine-5'-phosphate decarboxylase activity"/>
    <property type="evidence" value="ECO:0007669"/>
    <property type="project" value="InterPro"/>
</dbReference>
<dbReference type="GO" id="GO:0006207">
    <property type="term" value="P:'de novo' pyrimidine nucleobase biosynthetic process"/>
    <property type="evidence" value="ECO:0007669"/>
    <property type="project" value="InterPro"/>
</dbReference>
<dbReference type="GO" id="GO:0019854">
    <property type="term" value="P:L-ascorbic acid catabolic process"/>
    <property type="evidence" value="ECO:0007669"/>
    <property type="project" value="UniProtKB-UniRule"/>
</dbReference>
<dbReference type="CDD" id="cd04726">
    <property type="entry name" value="KGPDC_HPS"/>
    <property type="match status" value="1"/>
</dbReference>
<dbReference type="FunFam" id="3.20.20.70:FF:000022">
    <property type="entry name" value="3-keto-L-gulonate-6-phosphate decarboxylase UlaD"/>
    <property type="match status" value="1"/>
</dbReference>
<dbReference type="Gene3D" id="3.20.20.70">
    <property type="entry name" value="Aldolase class I"/>
    <property type="match status" value="1"/>
</dbReference>
<dbReference type="HAMAP" id="MF_01267">
    <property type="entry name" value="UlaD"/>
    <property type="match status" value="1"/>
</dbReference>
<dbReference type="InterPro" id="IPR023942">
    <property type="entry name" value="3-keto-L-gulonate6Pdecase_UlaD"/>
</dbReference>
<dbReference type="InterPro" id="IPR013785">
    <property type="entry name" value="Aldolase_TIM"/>
</dbReference>
<dbReference type="InterPro" id="IPR041710">
    <property type="entry name" value="HPS/KGPDC"/>
</dbReference>
<dbReference type="InterPro" id="IPR001754">
    <property type="entry name" value="OMPdeCOase_dom"/>
</dbReference>
<dbReference type="InterPro" id="IPR011060">
    <property type="entry name" value="RibuloseP-bd_barrel"/>
</dbReference>
<dbReference type="NCBIfam" id="NF009832">
    <property type="entry name" value="PRK13306.1"/>
    <property type="match status" value="1"/>
</dbReference>
<dbReference type="PANTHER" id="PTHR35039">
    <property type="entry name" value="3-KETO-L-GULONATE-6-PHOSPHATE DECARBOXYLASE SGBH-RELATED"/>
    <property type="match status" value="1"/>
</dbReference>
<dbReference type="PANTHER" id="PTHR35039:SF3">
    <property type="entry name" value="3-KETO-L-GULONATE-6-PHOSPHATE DECARBOXYLASE SGBH-RELATED"/>
    <property type="match status" value="1"/>
</dbReference>
<dbReference type="Pfam" id="PF00215">
    <property type="entry name" value="OMPdecase"/>
    <property type="match status" value="1"/>
</dbReference>
<dbReference type="SMART" id="SM00934">
    <property type="entry name" value="OMPdecase"/>
    <property type="match status" value="1"/>
</dbReference>
<dbReference type="SUPFAM" id="SSF51366">
    <property type="entry name" value="Ribulose-phoshate binding barrel"/>
    <property type="match status" value="1"/>
</dbReference>
<sequence length="216" mass="23605">MSLPMLQVALDNQTMASAYETTRLIAEEVDIIEVGTILCVGEGVRAVRDLKALYPHKIVLADAKIADAGKILSRMCFEANADWVTVICCADINTAKGALDVAKEFNGDVQIELTGYWTWEQAQQWRDAGIQQVVYHRSRDAQAAGVAWGEADITAIKRLSDMGFKVTVTGGLALEDLPLFKGIPIHVFIAGRSIRDAASPVEAARQFKRSIAELWG</sequence>
<protein>
    <recommendedName>
        <fullName evidence="1">3-keto-L-gulonate-6-phosphate decarboxylase UlaD</fullName>
        <ecNumber evidence="1">4.1.1.85</ecNumber>
    </recommendedName>
    <alternativeName>
        <fullName evidence="1">3-dehydro-L-gulonate-6-phosphate decarboxylase</fullName>
    </alternativeName>
    <alternativeName>
        <fullName evidence="1">KGPDC</fullName>
    </alternativeName>
    <alternativeName>
        <fullName evidence="1">L-ascorbate utilization protein D</fullName>
    </alternativeName>
</protein>
<gene>
    <name evidence="1" type="primary">ulaD</name>
    <name type="ordered locus">EFER_4249</name>
</gene>
<proteinExistence type="inferred from homology"/>
<organism>
    <name type="scientific">Escherichia fergusonii (strain ATCC 35469 / DSM 13698 / CCUG 18766 / IAM 14443 / JCM 21226 / LMG 7866 / NBRC 102419 / NCTC 12128 / CDC 0568-73)</name>
    <dbReference type="NCBI Taxonomy" id="585054"/>
    <lineage>
        <taxon>Bacteria</taxon>
        <taxon>Pseudomonadati</taxon>
        <taxon>Pseudomonadota</taxon>
        <taxon>Gammaproteobacteria</taxon>
        <taxon>Enterobacterales</taxon>
        <taxon>Enterobacteriaceae</taxon>
        <taxon>Escherichia</taxon>
    </lineage>
</organism>